<protein>
    <recommendedName>
        <fullName evidence="1">Large ribosomal subunit protein bL36</fullName>
    </recommendedName>
    <alternativeName>
        <fullName evidence="2">50S ribosomal protein L36</fullName>
    </alternativeName>
</protein>
<dbReference type="EMBL" id="CP000316">
    <property type="protein sequence ID" value="ABE42461.1"/>
    <property type="molecule type" value="Genomic_DNA"/>
</dbReference>
<dbReference type="RefSeq" id="WP_011481465.1">
    <property type="nucleotide sequence ID" value="NC_007948.1"/>
</dbReference>
<dbReference type="SMR" id="Q12G81"/>
<dbReference type="STRING" id="296591.Bpro_0497"/>
<dbReference type="KEGG" id="pol:Bpro_0497"/>
<dbReference type="eggNOG" id="COG0257">
    <property type="taxonomic scope" value="Bacteria"/>
</dbReference>
<dbReference type="HOGENOM" id="CLU_135723_6_2_4"/>
<dbReference type="OrthoDB" id="9802520at2"/>
<dbReference type="Proteomes" id="UP000001983">
    <property type="component" value="Chromosome"/>
</dbReference>
<dbReference type="GO" id="GO:0005737">
    <property type="term" value="C:cytoplasm"/>
    <property type="evidence" value="ECO:0007669"/>
    <property type="project" value="UniProtKB-ARBA"/>
</dbReference>
<dbReference type="GO" id="GO:1990904">
    <property type="term" value="C:ribonucleoprotein complex"/>
    <property type="evidence" value="ECO:0007669"/>
    <property type="project" value="UniProtKB-KW"/>
</dbReference>
<dbReference type="GO" id="GO:0005840">
    <property type="term" value="C:ribosome"/>
    <property type="evidence" value="ECO:0007669"/>
    <property type="project" value="UniProtKB-KW"/>
</dbReference>
<dbReference type="GO" id="GO:0003735">
    <property type="term" value="F:structural constituent of ribosome"/>
    <property type="evidence" value="ECO:0007669"/>
    <property type="project" value="InterPro"/>
</dbReference>
<dbReference type="GO" id="GO:0006412">
    <property type="term" value="P:translation"/>
    <property type="evidence" value="ECO:0007669"/>
    <property type="project" value="UniProtKB-UniRule"/>
</dbReference>
<dbReference type="HAMAP" id="MF_00251">
    <property type="entry name" value="Ribosomal_bL36"/>
    <property type="match status" value="1"/>
</dbReference>
<dbReference type="InterPro" id="IPR000473">
    <property type="entry name" value="Ribosomal_bL36"/>
</dbReference>
<dbReference type="InterPro" id="IPR035977">
    <property type="entry name" value="Ribosomal_bL36_sp"/>
</dbReference>
<dbReference type="NCBIfam" id="TIGR01022">
    <property type="entry name" value="rpmJ_bact"/>
    <property type="match status" value="1"/>
</dbReference>
<dbReference type="PANTHER" id="PTHR42888">
    <property type="entry name" value="50S RIBOSOMAL PROTEIN L36, CHLOROPLASTIC"/>
    <property type="match status" value="1"/>
</dbReference>
<dbReference type="PANTHER" id="PTHR42888:SF1">
    <property type="entry name" value="LARGE RIBOSOMAL SUBUNIT PROTEIN BL36C"/>
    <property type="match status" value="1"/>
</dbReference>
<dbReference type="Pfam" id="PF00444">
    <property type="entry name" value="Ribosomal_L36"/>
    <property type="match status" value="1"/>
</dbReference>
<dbReference type="SUPFAM" id="SSF57840">
    <property type="entry name" value="Ribosomal protein L36"/>
    <property type="match status" value="1"/>
</dbReference>
<dbReference type="PROSITE" id="PS00828">
    <property type="entry name" value="RIBOSOMAL_L36"/>
    <property type="match status" value="1"/>
</dbReference>
<reference key="1">
    <citation type="journal article" date="2008" name="Appl. Environ. Microbiol.">
        <title>The genome of Polaromonas sp. strain JS666: insights into the evolution of a hydrocarbon- and xenobiotic-degrading bacterium, and features of relevance to biotechnology.</title>
        <authorList>
            <person name="Mattes T.E."/>
            <person name="Alexander A.K."/>
            <person name="Richardson P.M."/>
            <person name="Munk A.C."/>
            <person name="Han C.S."/>
            <person name="Stothard P."/>
            <person name="Coleman N.V."/>
        </authorList>
    </citation>
    <scope>NUCLEOTIDE SEQUENCE [LARGE SCALE GENOMIC DNA]</scope>
    <source>
        <strain>JS666 / ATCC BAA-500</strain>
    </source>
</reference>
<gene>
    <name evidence="1" type="primary">rpmJ</name>
    <name type="ordered locus">Bpro_0497</name>
</gene>
<name>RL36_POLSJ</name>
<accession>Q12G81</accession>
<organism>
    <name type="scientific">Polaromonas sp. (strain JS666 / ATCC BAA-500)</name>
    <dbReference type="NCBI Taxonomy" id="296591"/>
    <lineage>
        <taxon>Bacteria</taxon>
        <taxon>Pseudomonadati</taxon>
        <taxon>Pseudomonadota</taxon>
        <taxon>Betaproteobacteria</taxon>
        <taxon>Burkholderiales</taxon>
        <taxon>Comamonadaceae</taxon>
        <taxon>Polaromonas</taxon>
    </lineage>
</organism>
<feature type="chain" id="PRO_0000302265" description="Large ribosomal subunit protein bL36">
    <location>
        <begin position="1"/>
        <end position="37"/>
    </location>
</feature>
<proteinExistence type="inferred from homology"/>
<comment type="similarity">
    <text evidence="1">Belongs to the bacterial ribosomal protein bL36 family.</text>
</comment>
<keyword id="KW-1185">Reference proteome</keyword>
<keyword id="KW-0687">Ribonucleoprotein</keyword>
<keyword id="KW-0689">Ribosomal protein</keyword>
<evidence type="ECO:0000255" key="1">
    <source>
        <dbReference type="HAMAP-Rule" id="MF_00251"/>
    </source>
</evidence>
<evidence type="ECO:0000305" key="2"/>
<sequence length="37" mass="4321">MRVSASVKKICRNCKIIRRKGVVRVICTDPRHKQRQG</sequence>